<sequence length="228" mass="25559">MSPSLTWHDVIGQEKEQPYFKDTLAYVAAERRAGKTIYPPQKDIFNAFRLTELDQVKVVILGQDPYHGPNQAHGLSFSVLPGVPAPPSLGNIYKELVTDIPGFQRPNHGFLQSWAEQGVLLLNTVLTVEAGKAHSHANLGWETFTDKVIAALNEHREGVIFMLWGSHAQKKGRIINTERHYILKAPHPSPLSAHRGFLGCKHFSQANQLLQQQNQQPIDWQPKLPAVE</sequence>
<dbReference type="EC" id="3.2.2.27" evidence="1"/>
<dbReference type="EMBL" id="CP000305">
    <property type="protein sequence ID" value="ABG17522.1"/>
    <property type="molecule type" value="Genomic_DNA"/>
</dbReference>
<dbReference type="EMBL" id="ACNQ01000008">
    <property type="protein sequence ID" value="EEO77626.1"/>
    <property type="molecule type" value="Genomic_DNA"/>
</dbReference>
<dbReference type="RefSeq" id="WP_002209663.1">
    <property type="nucleotide sequence ID" value="NZ_ACNQ01000008.1"/>
</dbReference>
<dbReference type="SMR" id="Q1CKF8"/>
<dbReference type="GeneID" id="57975987"/>
<dbReference type="KEGG" id="ypn:YPN_1192"/>
<dbReference type="HOGENOM" id="CLU_032162_3_0_6"/>
<dbReference type="Proteomes" id="UP000008936">
    <property type="component" value="Chromosome"/>
</dbReference>
<dbReference type="GO" id="GO:0005737">
    <property type="term" value="C:cytoplasm"/>
    <property type="evidence" value="ECO:0007669"/>
    <property type="project" value="UniProtKB-SubCell"/>
</dbReference>
<dbReference type="GO" id="GO:0004844">
    <property type="term" value="F:uracil DNA N-glycosylase activity"/>
    <property type="evidence" value="ECO:0007669"/>
    <property type="project" value="UniProtKB-UniRule"/>
</dbReference>
<dbReference type="GO" id="GO:0097510">
    <property type="term" value="P:base-excision repair, AP site formation via deaminated base removal"/>
    <property type="evidence" value="ECO:0007669"/>
    <property type="project" value="TreeGrafter"/>
</dbReference>
<dbReference type="CDD" id="cd10027">
    <property type="entry name" value="UDG-F1-like"/>
    <property type="match status" value="1"/>
</dbReference>
<dbReference type="FunFam" id="3.40.470.10:FF:000001">
    <property type="entry name" value="Uracil-DNA glycosylase"/>
    <property type="match status" value="1"/>
</dbReference>
<dbReference type="Gene3D" id="3.40.470.10">
    <property type="entry name" value="Uracil-DNA glycosylase-like domain"/>
    <property type="match status" value="1"/>
</dbReference>
<dbReference type="HAMAP" id="MF_00148">
    <property type="entry name" value="UDG"/>
    <property type="match status" value="1"/>
</dbReference>
<dbReference type="InterPro" id="IPR002043">
    <property type="entry name" value="UDG_fam1"/>
</dbReference>
<dbReference type="InterPro" id="IPR018085">
    <property type="entry name" value="Ura-DNA_Glyclase_AS"/>
</dbReference>
<dbReference type="InterPro" id="IPR005122">
    <property type="entry name" value="Uracil-DNA_glycosylase-like"/>
</dbReference>
<dbReference type="InterPro" id="IPR036895">
    <property type="entry name" value="Uracil-DNA_glycosylase-like_sf"/>
</dbReference>
<dbReference type="NCBIfam" id="NF003588">
    <property type="entry name" value="PRK05254.1-1"/>
    <property type="match status" value="1"/>
</dbReference>
<dbReference type="NCBIfam" id="NF003589">
    <property type="entry name" value="PRK05254.1-2"/>
    <property type="match status" value="1"/>
</dbReference>
<dbReference type="NCBIfam" id="NF003591">
    <property type="entry name" value="PRK05254.1-4"/>
    <property type="match status" value="1"/>
</dbReference>
<dbReference type="NCBIfam" id="NF003592">
    <property type="entry name" value="PRK05254.1-5"/>
    <property type="match status" value="1"/>
</dbReference>
<dbReference type="NCBIfam" id="TIGR00628">
    <property type="entry name" value="ung"/>
    <property type="match status" value="1"/>
</dbReference>
<dbReference type="PANTHER" id="PTHR11264">
    <property type="entry name" value="URACIL-DNA GLYCOSYLASE"/>
    <property type="match status" value="1"/>
</dbReference>
<dbReference type="PANTHER" id="PTHR11264:SF0">
    <property type="entry name" value="URACIL-DNA GLYCOSYLASE"/>
    <property type="match status" value="1"/>
</dbReference>
<dbReference type="Pfam" id="PF03167">
    <property type="entry name" value="UDG"/>
    <property type="match status" value="1"/>
</dbReference>
<dbReference type="SMART" id="SM00986">
    <property type="entry name" value="UDG"/>
    <property type="match status" value="1"/>
</dbReference>
<dbReference type="SMART" id="SM00987">
    <property type="entry name" value="UreE_C"/>
    <property type="match status" value="1"/>
</dbReference>
<dbReference type="SUPFAM" id="SSF52141">
    <property type="entry name" value="Uracil-DNA glycosylase-like"/>
    <property type="match status" value="1"/>
</dbReference>
<dbReference type="PROSITE" id="PS00130">
    <property type="entry name" value="U_DNA_GLYCOSYLASE"/>
    <property type="match status" value="1"/>
</dbReference>
<gene>
    <name evidence="1" type="primary">ung</name>
    <name type="ordered locus">YPN_1192</name>
    <name type="ORF">YP516_1303</name>
</gene>
<keyword id="KW-0963">Cytoplasm</keyword>
<keyword id="KW-0227">DNA damage</keyword>
<keyword id="KW-0234">DNA repair</keyword>
<keyword id="KW-0378">Hydrolase</keyword>
<comment type="function">
    <text evidence="1">Excises uracil residues from the DNA which can arise as a result of misincorporation of dUMP residues by DNA polymerase or due to deamination of cytosine.</text>
</comment>
<comment type="catalytic activity">
    <reaction evidence="1">
        <text>Hydrolyzes single-stranded DNA or mismatched double-stranded DNA and polynucleotides, releasing free uracil.</text>
        <dbReference type="EC" id="3.2.2.27"/>
    </reaction>
</comment>
<comment type="subcellular location">
    <subcellularLocation>
        <location evidence="1">Cytoplasm</location>
    </subcellularLocation>
</comment>
<comment type="similarity">
    <text evidence="1">Belongs to the uracil-DNA glycosylase (UDG) superfamily. UNG family.</text>
</comment>
<feature type="chain" id="PRO_1000009968" description="Uracil-DNA glycosylase">
    <location>
        <begin position="1"/>
        <end position="228"/>
    </location>
</feature>
<feature type="active site" description="Proton acceptor" evidence="1">
    <location>
        <position position="64"/>
    </location>
</feature>
<accession>Q1CKF8</accession>
<accession>C4GRD5</accession>
<name>UNG_YERPN</name>
<reference key="1">
    <citation type="journal article" date="2006" name="J. Bacteriol.">
        <title>Complete genome sequence of Yersinia pestis strains Antiqua and Nepal516: evidence of gene reduction in an emerging pathogen.</title>
        <authorList>
            <person name="Chain P.S.G."/>
            <person name="Hu P."/>
            <person name="Malfatti S.A."/>
            <person name="Radnedge L."/>
            <person name="Larimer F."/>
            <person name="Vergez L.M."/>
            <person name="Worsham P."/>
            <person name="Chu M.C."/>
            <person name="Andersen G.L."/>
        </authorList>
    </citation>
    <scope>NUCLEOTIDE SEQUENCE [LARGE SCALE GENOMIC DNA]</scope>
    <source>
        <strain>Nepal516</strain>
    </source>
</reference>
<reference key="2">
    <citation type="submission" date="2009-04" db="EMBL/GenBank/DDBJ databases">
        <title>Yersinia pestis Nepal516A whole genome shotgun sequencing project.</title>
        <authorList>
            <person name="Plunkett G. III"/>
            <person name="Anderson B.D."/>
            <person name="Baumler D.J."/>
            <person name="Burland V."/>
            <person name="Cabot E.L."/>
            <person name="Glasner J.D."/>
            <person name="Mau B."/>
            <person name="Neeno-Eckwall E."/>
            <person name="Perna N.T."/>
            <person name="Munk A.C."/>
            <person name="Tapia R."/>
            <person name="Green L.D."/>
            <person name="Rogers Y.C."/>
            <person name="Detter J.C."/>
            <person name="Bruce D.C."/>
            <person name="Brettin T.S."/>
        </authorList>
    </citation>
    <scope>NUCLEOTIDE SEQUENCE [LARGE SCALE GENOMIC DNA]</scope>
    <source>
        <strain>Nepal516</strain>
    </source>
</reference>
<protein>
    <recommendedName>
        <fullName evidence="1">Uracil-DNA glycosylase</fullName>
        <shortName evidence="1">UDG</shortName>
        <ecNumber evidence="1">3.2.2.27</ecNumber>
    </recommendedName>
</protein>
<organism>
    <name type="scientific">Yersinia pestis bv. Antiqua (strain Nepal516)</name>
    <dbReference type="NCBI Taxonomy" id="377628"/>
    <lineage>
        <taxon>Bacteria</taxon>
        <taxon>Pseudomonadati</taxon>
        <taxon>Pseudomonadota</taxon>
        <taxon>Gammaproteobacteria</taxon>
        <taxon>Enterobacterales</taxon>
        <taxon>Yersiniaceae</taxon>
        <taxon>Yersinia</taxon>
    </lineage>
</organism>
<evidence type="ECO:0000255" key="1">
    <source>
        <dbReference type="HAMAP-Rule" id="MF_00148"/>
    </source>
</evidence>
<proteinExistence type="inferred from homology"/>